<comment type="catalytic activity">
    <reaction>
        <text>sn-glycerol 3-phosphate + O2 = dihydroxyacetone phosphate + H2O2</text>
        <dbReference type="Rhea" id="RHEA:18369"/>
        <dbReference type="ChEBI" id="CHEBI:15379"/>
        <dbReference type="ChEBI" id="CHEBI:16240"/>
        <dbReference type="ChEBI" id="CHEBI:57597"/>
        <dbReference type="ChEBI" id="CHEBI:57642"/>
        <dbReference type="EC" id="1.1.3.21"/>
    </reaction>
</comment>
<comment type="cofactor">
    <cofactor evidence="1">
        <name>FAD</name>
        <dbReference type="ChEBI" id="CHEBI:57692"/>
    </cofactor>
</comment>
<comment type="subcellular location">
    <subcellularLocation>
        <location evidence="1">Cytoplasm</location>
    </subcellularLocation>
</comment>
<comment type="similarity">
    <text evidence="4">Belongs to the FAD-dependent glycerol-3-phosphate dehydrogenase family.</text>
</comment>
<comment type="caution">
    <text evidence="4">As S.pyogenes is unable to produce acid from glycerol, the significance and/or function of the glpO gene in this organism is at present unknown.</text>
</comment>
<gene>
    <name type="primary">glpO</name>
    <name type="ordered locus">SPs0399</name>
</gene>
<reference key="1">
    <citation type="journal article" date="2003" name="Genome Res.">
        <title>Genome sequence of an M3 strain of Streptococcus pyogenes reveals a large-scale genomic rearrangement in invasive strains and new insights into phage evolution.</title>
        <authorList>
            <person name="Nakagawa I."/>
            <person name="Kurokawa K."/>
            <person name="Yamashita A."/>
            <person name="Nakata M."/>
            <person name="Tomiyasu Y."/>
            <person name="Okahashi N."/>
            <person name="Kawabata S."/>
            <person name="Yamazaki K."/>
            <person name="Shiba T."/>
            <person name="Yasunaga T."/>
            <person name="Hayashi H."/>
            <person name="Hattori M."/>
            <person name="Hamada S."/>
        </authorList>
    </citation>
    <scope>NUCLEOTIDE SEQUENCE [LARGE SCALE GENOMIC DNA]</scope>
    <source>
        <strain>SSI-1</strain>
    </source>
</reference>
<protein>
    <recommendedName>
        <fullName>Alpha-glycerophosphate oxidase</fullName>
        <ecNumber>1.1.3.21</ecNumber>
    </recommendedName>
    <alternativeName>
        <fullName>Glycerol-3-phosphate oxidase</fullName>
    </alternativeName>
</protein>
<accession>P0DB21</accession>
<accession>Q8K666</accession>
<name>GLPO_STRPQ</name>
<proteinExistence type="inferred from homology"/>
<dbReference type="EC" id="1.1.3.21"/>
<dbReference type="EMBL" id="BA000034">
    <property type="protein sequence ID" value="BAC63494.1"/>
    <property type="molecule type" value="Genomic_DNA"/>
</dbReference>
<dbReference type="RefSeq" id="WP_011054908.1">
    <property type="nucleotide sequence ID" value="NC_004606.1"/>
</dbReference>
<dbReference type="SMR" id="P0DB21"/>
<dbReference type="KEGG" id="sps:SPs0399"/>
<dbReference type="HOGENOM" id="CLU_015740_5_2_9"/>
<dbReference type="GO" id="GO:0005737">
    <property type="term" value="C:cytoplasm"/>
    <property type="evidence" value="ECO:0007669"/>
    <property type="project" value="UniProtKB-SubCell"/>
</dbReference>
<dbReference type="GO" id="GO:0004368">
    <property type="term" value="F:glycerol-3-phosphate dehydrogenase (quinone) activity"/>
    <property type="evidence" value="ECO:0007669"/>
    <property type="project" value="InterPro"/>
</dbReference>
<dbReference type="GO" id="GO:0004369">
    <property type="term" value="F:glycerol-3-phosphate oxidase activity"/>
    <property type="evidence" value="ECO:0007669"/>
    <property type="project" value="UniProtKB-EC"/>
</dbReference>
<dbReference type="GO" id="GO:0006071">
    <property type="term" value="P:glycerol metabolic process"/>
    <property type="evidence" value="ECO:0007669"/>
    <property type="project" value="UniProtKB-KW"/>
</dbReference>
<dbReference type="GO" id="GO:0046168">
    <property type="term" value="P:glycerol-3-phosphate catabolic process"/>
    <property type="evidence" value="ECO:0007669"/>
    <property type="project" value="TreeGrafter"/>
</dbReference>
<dbReference type="Gene3D" id="1.10.8.870">
    <property type="entry name" value="Alpha-glycerophosphate oxidase, cap domain"/>
    <property type="match status" value="1"/>
</dbReference>
<dbReference type="Gene3D" id="3.30.9.10">
    <property type="entry name" value="D-Amino Acid Oxidase, subunit A, domain 2"/>
    <property type="match status" value="1"/>
</dbReference>
<dbReference type="Gene3D" id="3.50.50.60">
    <property type="entry name" value="FAD/NAD(P)-binding domain"/>
    <property type="match status" value="1"/>
</dbReference>
<dbReference type="InterPro" id="IPR031656">
    <property type="entry name" value="DAO_C"/>
</dbReference>
<dbReference type="InterPro" id="IPR038299">
    <property type="entry name" value="DAO_C_sf"/>
</dbReference>
<dbReference type="InterPro" id="IPR006076">
    <property type="entry name" value="FAD-dep_OxRdtase"/>
</dbReference>
<dbReference type="InterPro" id="IPR036188">
    <property type="entry name" value="FAD/NAD-bd_sf"/>
</dbReference>
<dbReference type="InterPro" id="IPR000447">
    <property type="entry name" value="G3P_DH_FAD-dep"/>
</dbReference>
<dbReference type="NCBIfam" id="NF033461">
    <property type="entry name" value="glycerol3P_ox_1"/>
    <property type="match status" value="1"/>
</dbReference>
<dbReference type="PANTHER" id="PTHR11985:SF35">
    <property type="entry name" value="ANAEROBIC GLYCEROL-3-PHOSPHATE DEHYDROGENASE SUBUNIT A"/>
    <property type="match status" value="1"/>
</dbReference>
<dbReference type="PANTHER" id="PTHR11985">
    <property type="entry name" value="GLYCEROL-3-PHOSPHATE DEHYDROGENASE"/>
    <property type="match status" value="1"/>
</dbReference>
<dbReference type="Pfam" id="PF01266">
    <property type="entry name" value="DAO"/>
    <property type="match status" value="1"/>
</dbReference>
<dbReference type="Pfam" id="PF16901">
    <property type="entry name" value="DAO_C"/>
    <property type="match status" value="1"/>
</dbReference>
<dbReference type="PRINTS" id="PR01001">
    <property type="entry name" value="FADG3PDH"/>
</dbReference>
<dbReference type="SUPFAM" id="SSF54373">
    <property type="entry name" value="FAD-linked reductases, C-terminal domain"/>
    <property type="match status" value="1"/>
</dbReference>
<dbReference type="SUPFAM" id="SSF51905">
    <property type="entry name" value="FAD/NAD(P)-binding domain"/>
    <property type="match status" value="1"/>
</dbReference>
<dbReference type="PROSITE" id="PS00977">
    <property type="entry name" value="FAD_G3PDH_1"/>
    <property type="match status" value="1"/>
</dbReference>
<organism>
    <name type="scientific">Streptococcus pyogenes serotype M3 (strain SSI-1)</name>
    <dbReference type="NCBI Taxonomy" id="193567"/>
    <lineage>
        <taxon>Bacteria</taxon>
        <taxon>Bacillati</taxon>
        <taxon>Bacillota</taxon>
        <taxon>Bacilli</taxon>
        <taxon>Lactobacillales</taxon>
        <taxon>Streptococcaceae</taxon>
        <taxon>Streptococcus</taxon>
    </lineage>
</organism>
<sequence>MEFSRETRRLALQKMQERDLDLLIIGGGITGAGVALQAAASGLDTGLIEMQDFAQGTSSRSTKLVHGGLRYLKQFDVEVVSDTVSERAVVQQIAPHIPKPDPMLLPVYDEPGSTFSMFRLKVAMDLYDLLAGVSNTPAANKVLTKEEVLKREPDLKQEGLLGGGVYLDFRNNDARLVIENIKRANRDGALIASHVKAEDFLLDDDGKIIGVKARDLLSDQEIIIKAKLVINTTGPWSDEIRQFSHKGQPIHQMRPTKGVHLVVDRQKLPVSQPVYVDTGLNDGRMVFVLPREEKTYFGTTDTDYTGDLEHPQVTQEDVDYLLGVVNNRFPNANVTIDDIESSWAGLRPLLSGNSASDYNGGNSGKVSDDSFDHLVDTVKAYINHEDSREAVEKAIKQVETSTSEKELDPSAVSRGSSFDRDENGLFTLAGGKITDYRKMAEGALTGIIQILKEEFGKSFKLINSKTYPVSGGEINPANVDLEIEAYAQLGTLSGLSMDDARYLANLYGSNAPKVFALTRQLTAAEGLSLAETLSLHYAMDYEMALKPTDYFLRRTNHLLFMRDSLDALIDPVINEMAKHFEWSDQERVAQEDDLRRVIADNDLSALKGHQEG</sequence>
<feature type="chain" id="PRO_0000411348" description="Alpha-glycerophosphate oxidase">
    <location>
        <begin position="1"/>
        <end position="612"/>
    </location>
</feature>
<feature type="region of interest" description="Disordered" evidence="3">
    <location>
        <begin position="398"/>
        <end position="418"/>
    </location>
</feature>
<feature type="compositionally biased region" description="Basic and acidic residues" evidence="3">
    <location>
        <begin position="398"/>
        <end position="408"/>
    </location>
</feature>
<feature type="binding site" evidence="2">
    <location>
        <begin position="21"/>
        <end position="49"/>
    </location>
    <ligand>
        <name>FAD</name>
        <dbReference type="ChEBI" id="CHEBI:57692"/>
    </ligand>
</feature>
<keyword id="KW-0963">Cytoplasm</keyword>
<keyword id="KW-0274">FAD</keyword>
<keyword id="KW-0285">Flavoprotein</keyword>
<keyword id="KW-0319">Glycerol metabolism</keyword>
<keyword id="KW-0560">Oxidoreductase</keyword>
<evidence type="ECO:0000250" key="1"/>
<evidence type="ECO:0000255" key="2"/>
<evidence type="ECO:0000256" key="3">
    <source>
        <dbReference type="SAM" id="MobiDB-lite"/>
    </source>
</evidence>
<evidence type="ECO:0000305" key="4"/>